<protein>
    <recommendedName>
        <fullName evidence="1">NADH-ubiquinone oxidoreductase chain 2</fullName>
        <ecNumber evidence="1">7.1.1.2</ecNumber>
    </recommendedName>
    <alternativeName>
        <fullName>NADH dehydrogenase subunit 2</fullName>
    </alternativeName>
</protein>
<proteinExistence type="inferred from homology"/>
<name>NU2M_HALGR</name>
<accession>P38599</accession>
<evidence type="ECO:0000250" key="1">
    <source>
        <dbReference type="UniProtKB" id="P03891"/>
    </source>
</evidence>
<evidence type="ECO:0000250" key="2">
    <source>
        <dbReference type="UniProtKB" id="P03892"/>
    </source>
</evidence>
<evidence type="ECO:0000255" key="3"/>
<evidence type="ECO:0000305" key="4"/>
<keyword id="KW-0249">Electron transport</keyword>
<keyword id="KW-0472">Membrane</keyword>
<keyword id="KW-0496">Mitochondrion</keyword>
<keyword id="KW-0999">Mitochondrion inner membrane</keyword>
<keyword id="KW-0520">NAD</keyword>
<keyword id="KW-0679">Respiratory chain</keyword>
<keyword id="KW-1278">Translocase</keyword>
<keyword id="KW-0812">Transmembrane</keyword>
<keyword id="KW-1133">Transmembrane helix</keyword>
<keyword id="KW-0813">Transport</keyword>
<keyword id="KW-0830">Ubiquinone</keyword>
<geneLocation type="mitochondrion"/>
<reference key="1">
    <citation type="journal article" date="1993" name="J. Mol. Evol.">
        <title>The nucleotide sequence of the mitochondrial DNA molecule of the grey seal, Halichoerus grypus, and a comparison with mitochondrial sequences of other true seals.</title>
        <authorList>
            <person name="Arnason U."/>
            <person name="Gullberg A."/>
            <person name="Johnsson E."/>
            <person name="Ledje C."/>
        </authorList>
    </citation>
    <scope>NUCLEOTIDE SEQUENCE [GENOMIC DNA]</scope>
</reference>
<feature type="chain" id="PRO_0000117591" description="NADH-ubiquinone oxidoreductase chain 2">
    <location>
        <begin position="1"/>
        <end position="347"/>
    </location>
</feature>
<feature type="transmembrane region" description="Helical" evidence="3">
    <location>
        <begin position="3"/>
        <end position="23"/>
    </location>
</feature>
<feature type="transmembrane region" description="Helical" evidence="3">
    <location>
        <begin position="25"/>
        <end position="45"/>
    </location>
</feature>
<feature type="transmembrane region" description="Helical" evidence="3">
    <location>
        <begin position="60"/>
        <end position="80"/>
    </location>
</feature>
<feature type="transmembrane region" description="Helical" evidence="3">
    <location>
        <begin position="96"/>
        <end position="116"/>
    </location>
</feature>
<feature type="transmembrane region" description="Helical" evidence="3">
    <location>
        <begin position="122"/>
        <end position="142"/>
    </location>
</feature>
<feature type="transmembrane region" description="Helical" evidence="3">
    <location>
        <begin position="153"/>
        <end position="173"/>
    </location>
</feature>
<feature type="transmembrane region" description="Helical" evidence="3">
    <location>
        <begin position="178"/>
        <end position="198"/>
    </location>
</feature>
<feature type="transmembrane region" description="Helical" evidence="3">
    <location>
        <begin position="200"/>
        <end position="220"/>
    </location>
</feature>
<feature type="transmembrane region" description="Helical" evidence="3">
    <location>
        <begin position="237"/>
        <end position="257"/>
    </location>
</feature>
<feature type="transmembrane region" description="Helical" evidence="3">
    <location>
        <begin position="274"/>
        <end position="294"/>
    </location>
</feature>
<feature type="transmembrane region" description="Helical" evidence="3">
    <location>
        <begin position="323"/>
        <end position="343"/>
    </location>
</feature>
<organism>
    <name type="scientific">Halichoerus grypus</name>
    <name type="common">Gray seal</name>
    <name type="synonym">Phoca grypus</name>
    <dbReference type="NCBI Taxonomy" id="9711"/>
    <lineage>
        <taxon>Eukaryota</taxon>
        <taxon>Metazoa</taxon>
        <taxon>Chordata</taxon>
        <taxon>Craniata</taxon>
        <taxon>Vertebrata</taxon>
        <taxon>Euteleostomi</taxon>
        <taxon>Mammalia</taxon>
        <taxon>Eutheria</taxon>
        <taxon>Laurasiatheria</taxon>
        <taxon>Carnivora</taxon>
        <taxon>Caniformia</taxon>
        <taxon>Pinnipedia</taxon>
        <taxon>Phocidae</taxon>
        <taxon>Phocinae</taxon>
        <taxon>Halichoerus</taxon>
    </lineage>
</organism>
<dbReference type="EC" id="7.1.1.2" evidence="1"/>
<dbReference type="EMBL" id="X72004">
    <property type="protein sequence ID" value="CAA50878.1"/>
    <property type="molecule type" value="Genomic_DNA"/>
</dbReference>
<dbReference type="PIR" id="S41836">
    <property type="entry name" value="S41836"/>
</dbReference>
<dbReference type="RefSeq" id="NP_007070.1">
    <property type="nucleotide sequence ID" value="NC_001602.1"/>
</dbReference>
<dbReference type="SMR" id="P38599"/>
<dbReference type="GeneID" id="807756"/>
<dbReference type="CTD" id="4536"/>
<dbReference type="GO" id="GO:0005743">
    <property type="term" value="C:mitochondrial inner membrane"/>
    <property type="evidence" value="ECO:0000250"/>
    <property type="project" value="UniProtKB"/>
</dbReference>
<dbReference type="GO" id="GO:0008137">
    <property type="term" value="F:NADH dehydrogenase (ubiquinone) activity"/>
    <property type="evidence" value="ECO:0000250"/>
    <property type="project" value="UniProtKB"/>
</dbReference>
<dbReference type="GO" id="GO:0006120">
    <property type="term" value="P:mitochondrial electron transport, NADH to ubiquinone"/>
    <property type="evidence" value="ECO:0000250"/>
    <property type="project" value="UniProtKB"/>
</dbReference>
<dbReference type="GO" id="GO:0032981">
    <property type="term" value="P:mitochondrial respiratory chain complex I assembly"/>
    <property type="evidence" value="ECO:0000250"/>
    <property type="project" value="UniProtKB"/>
</dbReference>
<dbReference type="InterPro" id="IPR050175">
    <property type="entry name" value="Complex_I_Subunit_2"/>
</dbReference>
<dbReference type="InterPro" id="IPR010933">
    <property type="entry name" value="NADH_DH_su2_C"/>
</dbReference>
<dbReference type="InterPro" id="IPR003917">
    <property type="entry name" value="NADH_UbQ_OxRdtase_chain2"/>
</dbReference>
<dbReference type="InterPro" id="IPR001750">
    <property type="entry name" value="ND/Mrp_TM"/>
</dbReference>
<dbReference type="PANTHER" id="PTHR46552">
    <property type="entry name" value="NADH-UBIQUINONE OXIDOREDUCTASE CHAIN 2"/>
    <property type="match status" value="1"/>
</dbReference>
<dbReference type="PANTHER" id="PTHR46552:SF1">
    <property type="entry name" value="NADH-UBIQUINONE OXIDOREDUCTASE CHAIN 2"/>
    <property type="match status" value="1"/>
</dbReference>
<dbReference type="Pfam" id="PF06444">
    <property type="entry name" value="NADH_dehy_S2_C"/>
    <property type="match status" value="1"/>
</dbReference>
<dbReference type="Pfam" id="PF00361">
    <property type="entry name" value="Proton_antipo_M"/>
    <property type="match status" value="1"/>
</dbReference>
<dbReference type="PRINTS" id="PR01436">
    <property type="entry name" value="NADHDHGNASE2"/>
</dbReference>
<gene>
    <name evidence="1" type="primary">MT-ND2</name>
    <name type="synonym">MTND2</name>
    <name type="synonym">NADH2</name>
    <name type="synonym">ND2</name>
</gene>
<comment type="function">
    <text evidence="1">Core subunit of the mitochondrial membrane respiratory chain NADH dehydrogenase (Complex I) which catalyzes electron transfer from NADH through the respiratory chain, using ubiquinone as an electron acceptor. Essential for the catalytic activity and assembly of complex I.</text>
</comment>
<comment type="catalytic activity">
    <reaction evidence="1">
        <text>a ubiquinone + NADH + 5 H(+)(in) = a ubiquinol + NAD(+) + 4 H(+)(out)</text>
        <dbReference type="Rhea" id="RHEA:29091"/>
        <dbReference type="Rhea" id="RHEA-COMP:9565"/>
        <dbReference type="Rhea" id="RHEA-COMP:9566"/>
        <dbReference type="ChEBI" id="CHEBI:15378"/>
        <dbReference type="ChEBI" id="CHEBI:16389"/>
        <dbReference type="ChEBI" id="CHEBI:17976"/>
        <dbReference type="ChEBI" id="CHEBI:57540"/>
        <dbReference type="ChEBI" id="CHEBI:57945"/>
        <dbReference type="EC" id="7.1.1.2"/>
    </reaction>
</comment>
<comment type="subunit">
    <text evidence="1 2">Core subunit of respiratory chain NADH dehydrogenase (Complex I) which is composed of 45 different subunits. Interacts with TMEM242 (By similarity).</text>
</comment>
<comment type="subcellular location">
    <subcellularLocation>
        <location evidence="2">Mitochondrion inner membrane</location>
        <topology evidence="3">Multi-pass membrane protein</topology>
    </subcellularLocation>
</comment>
<comment type="similarity">
    <text evidence="4">Belongs to the complex I subunit 2 family.</text>
</comment>
<sequence length="347" mass="38767">MKPPILIIIMSTVMSGTMIVLTSSHWLLIWIGFEMNMLAIIPILMKNHTPRATEASTKYFLTQATASMLLMMGIIINLMFSGEWSISKIPNPIASGLVTIALTMKLGMAPFHFWVPEVTQGISLSSGMILLTWQKIAPLSILYQISPSINPKLLITMAIASVLIGGWGGLNQTQLRKILAYSSIAHMGWMAVILTYNPTLMILNLTIYITMTLSTFMLFMHNSSTTTLSLSNTWNKLPLMTSLILVLMMSLGGLPPLSGFAPKWMIIQELTKNDMIILPTFMAITALLNLYFYMRLSYTTALTMFPSVNNMKMKWQFESAKKIILLPPLIIISTMLLPMTPMMSILE</sequence>